<evidence type="ECO:0000250" key="1">
    <source>
        <dbReference type="UniProtKB" id="P56761"/>
    </source>
</evidence>
<evidence type="ECO:0000255" key="2">
    <source>
        <dbReference type="HAMAP-Rule" id="MF_01383"/>
    </source>
</evidence>
<geneLocation type="chloroplast"/>
<proteinExistence type="inferred from homology"/>
<accession>Q68S11</accession>
<dbReference type="EC" id="1.10.3.9" evidence="2"/>
<dbReference type="EMBL" id="AY582139">
    <property type="protein sequence ID" value="AAT98504.1"/>
    <property type="molecule type" value="Genomic_DNA"/>
</dbReference>
<dbReference type="RefSeq" id="YP_086961.1">
    <property type="nucleotide sequence ID" value="NC_006290.1"/>
</dbReference>
<dbReference type="SMR" id="Q68S11"/>
<dbReference type="GeneID" id="3021557"/>
<dbReference type="GO" id="GO:0009535">
    <property type="term" value="C:chloroplast thylakoid membrane"/>
    <property type="evidence" value="ECO:0007669"/>
    <property type="project" value="UniProtKB-SubCell"/>
</dbReference>
<dbReference type="GO" id="GO:0009523">
    <property type="term" value="C:photosystem II"/>
    <property type="evidence" value="ECO:0007669"/>
    <property type="project" value="UniProtKB-KW"/>
</dbReference>
<dbReference type="GO" id="GO:0016168">
    <property type="term" value="F:chlorophyll binding"/>
    <property type="evidence" value="ECO:0007669"/>
    <property type="project" value="UniProtKB-UniRule"/>
</dbReference>
<dbReference type="GO" id="GO:0045156">
    <property type="term" value="F:electron transporter, transferring electrons within the cyclic electron transport pathway of photosynthesis activity"/>
    <property type="evidence" value="ECO:0007669"/>
    <property type="project" value="InterPro"/>
</dbReference>
<dbReference type="GO" id="GO:0005506">
    <property type="term" value="F:iron ion binding"/>
    <property type="evidence" value="ECO:0007669"/>
    <property type="project" value="UniProtKB-UniRule"/>
</dbReference>
<dbReference type="GO" id="GO:0010242">
    <property type="term" value="F:oxygen evolving activity"/>
    <property type="evidence" value="ECO:0007669"/>
    <property type="project" value="UniProtKB-EC"/>
</dbReference>
<dbReference type="GO" id="GO:0009772">
    <property type="term" value="P:photosynthetic electron transport in photosystem II"/>
    <property type="evidence" value="ECO:0007669"/>
    <property type="project" value="InterPro"/>
</dbReference>
<dbReference type="CDD" id="cd09288">
    <property type="entry name" value="Photosystem-II_D2"/>
    <property type="match status" value="1"/>
</dbReference>
<dbReference type="FunFam" id="1.20.85.10:FF:000001">
    <property type="entry name" value="photosystem II D2 protein-like"/>
    <property type="match status" value="1"/>
</dbReference>
<dbReference type="Gene3D" id="1.20.85.10">
    <property type="entry name" value="Photosystem II protein D1-like"/>
    <property type="match status" value="1"/>
</dbReference>
<dbReference type="HAMAP" id="MF_01383">
    <property type="entry name" value="PSII_PsbD_D2"/>
    <property type="match status" value="1"/>
</dbReference>
<dbReference type="InterPro" id="IPR055266">
    <property type="entry name" value="D1/D2"/>
</dbReference>
<dbReference type="InterPro" id="IPR036854">
    <property type="entry name" value="Photo_II_D1/D2_sf"/>
</dbReference>
<dbReference type="InterPro" id="IPR000484">
    <property type="entry name" value="Photo_RC_L/M"/>
</dbReference>
<dbReference type="InterPro" id="IPR055265">
    <property type="entry name" value="Photo_RC_L/M_CS"/>
</dbReference>
<dbReference type="InterPro" id="IPR005868">
    <property type="entry name" value="PSII_PsbD/D2"/>
</dbReference>
<dbReference type="NCBIfam" id="TIGR01152">
    <property type="entry name" value="psbD"/>
    <property type="match status" value="1"/>
</dbReference>
<dbReference type="PANTHER" id="PTHR33149:SF57">
    <property type="entry name" value="PHOTOSYSTEM II D2 PROTEIN"/>
    <property type="match status" value="1"/>
</dbReference>
<dbReference type="PANTHER" id="PTHR33149">
    <property type="entry name" value="PHOTOSYSTEM II PROTEIN D1"/>
    <property type="match status" value="1"/>
</dbReference>
<dbReference type="Pfam" id="PF00124">
    <property type="entry name" value="Photo_RC"/>
    <property type="match status" value="1"/>
</dbReference>
<dbReference type="PRINTS" id="PR00256">
    <property type="entry name" value="REACTNCENTRE"/>
</dbReference>
<dbReference type="SUPFAM" id="SSF81483">
    <property type="entry name" value="Bacterial photosystem II reaction centre, L and M subunits"/>
    <property type="match status" value="1"/>
</dbReference>
<dbReference type="PROSITE" id="PS00244">
    <property type="entry name" value="REACTION_CENTER"/>
    <property type="match status" value="1"/>
</dbReference>
<name>PSBD_PANGI</name>
<gene>
    <name evidence="2" type="primary">psbD</name>
    <name type="ORF">PSC00348</name>
</gene>
<comment type="function">
    <text evidence="2">Photosystem II (PSII) is a light-driven water:plastoquinone oxidoreductase that uses light energy to abstract electrons from H(2)O, generating O(2) and a proton gradient subsequently used for ATP formation. It consists of a core antenna complex that captures photons, and an electron transfer chain that converts photonic excitation into a charge separation. The D1/D2 (PsbA/PsbD) reaction center heterodimer binds P680, the primary electron donor of PSII as well as several subsequent electron acceptors. D2 is needed for assembly of a stable PSII complex.</text>
</comment>
<comment type="catalytic activity">
    <reaction evidence="2">
        <text>2 a plastoquinone + 4 hnu + 2 H2O = 2 a plastoquinol + O2</text>
        <dbReference type="Rhea" id="RHEA:36359"/>
        <dbReference type="Rhea" id="RHEA-COMP:9561"/>
        <dbReference type="Rhea" id="RHEA-COMP:9562"/>
        <dbReference type="ChEBI" id="CHEBI:15377"/>
        <dbReference type="ChEBI" id="CHEBI:15379"/>
        <dbReference type="ChEBI" id="CHEBI:17757"/>
        <dbReference type="ChEBI" id="CHEBI:30212"/>
        <dbReference type="ChEBI" id="CHEBI:62192"/>
        <dbReference type="EC" id="1.10.3.9"/>
    </reaction>
</comment>
<comment type="cofactor">
    <text evidence="2">The D1/D2 heterodimer binds P680, chlorophylls that are the primary electron donor of PSII, and subsequent electron acceptors. It shares a non-heme iron and each subunit binds pheophytin, quinone, additional chlorophylls, carotenoids and lipids. There is also a Cl(-1) ion associated with D1 and D2, which is required for oxygen evolution. The PSII complex binds additional chlorophylls, carotenoids and specific lipids.</text>
</comment>
<comment type="subunit">
    <text evidence="2">PSII is composed of 1 copy each of membrane proteins PsbA, PsbB, PsbC, PsbD, PsbE, PsbF, PsbH, PsbI, PsbJ, PsbK, PsbL, PsbM, PsbT, PsbX, PsbY, PsbZ, Psb30/Ycf12, at least 3 peripheral proteins of the oxygen-evolving complex and a large number of cofactors. It forms dimeric complexes.</text>
</comment>
<comment type="subcellular location">
    <subcellularLocation>
        <location evidence="2">Plastid</location>
        <location evidence="2">Chloroplast thylakoid membrane</location>
        <topology evidence="2">Multi-pass membrane protein</topology>
    </subcellularLocation>
</comment>
<comment type="miscellaneous">
    <text evidence="2">2 of the reaction center chlorophylls (ChlD1 and ChlD2) are entirely coordinated by water.</text>
</comment>
<comment type="similarity">
    <text evidence="2">Belongs to the reaction center PufL/M/PsbA/D family.</text>
</comment>
<sequence>MTIALGKFTEDEKDLFDIMDDWLRRDRFVFVGWSGLLLFPCAYFALGGWFTGTTFVTSWYTHGLASSYLEGCNFLTAAVSTPANSLAHSLLLLWGPEAQGDFTRWCQLGGLWTFVALHGAFGLIGFMLRQFELARSVQLRPYNAIAFSGPIAVFVSVFLIYPLGQSGWFFAPSFGVAAIFRFILFFQGFHNWTLNPFHMMGVAGVLGAALLCAIHGATVENLYFEDGDGANTFRAFNPTQAEETYSMVTANRFWSQIFGVAFSNKRWLHFFMLFVPVTGLWMSALGVVGLALNLRAYDFVSQEIRAAEDPEFETFYTKNILLNEGIRAWMAAQDQPHENLIFPEEVLPRGNAL</sequence>
<organism>
    <name type="scientific">Panax ginseng</name>
    <name type="common">Korean ginseng</name>
    <dbReference type="NCBI Taxonomy" id="4054"/>
    <lineage>
        <taxon>Eukaryota</taxon>
        <taxon>Viridiplantae</taxon>
        <taxon>Streptophyta</taxon>
        <taxon>Embryophyta</taxon>
        <taxon>Tracheophyta</taxon>
        <taxon>Spermatophyta</taxon>
        <taxon>Magnoliopsida</taxon>
        <taxon>eudicotyledons</taxon>
        <taxon>Gunneridae</taxon>
        <taxon>Pentapetalae</taxon>
        <taxon>asterids</taxon>
        <taxon>campanulids</taxon>
        <taxon>Apiales</taxon>
        <taxon>Araliaceae</taxon>
        <taxon>Panax</taxon>
    </lineage>
</organism>
<reference key="1">
    <citation type="journal article" date="2004" name="DNA Res.">
        <title>Complete chloroplast genome sequence from Korea ginseng (Panax schinseng Nees) and comparative analysis of sequence evolution among 17 vascular plants.</title>
        <authorList>
            <person name="Kim K.-J."/>
            <person name="Lee H.-L."/>
        </authorList>
    </citation>
    <scope>NUCLEOTIDE SEQUENCE [LARGE SCALE GENOMIC DNA]</scope>
</reference>
<keyword id="KW-0007">Acetylation</keyword>
<keyword id="KW-0148">Chlorophyll</keyword>
<keyword id="KW-0150">Chloroplast</keyword>
<keyword id="KW-0157">Chromophore</keyword>
<keyword id="KW-0249">Electron transport</keyword>
<keyword id="KW-0408">Iron</keyword>
<keyword id="KW-0460">Magnesium</keyword>
<keyword id="KW-0472">Membrane</keyword>
<keyword id="KW-0479">Metal-binding</keyword>
<keyword id="KW-0560">Oxidoreductase</keyword>
<keyword id="KW-0597">Phosphoprotein</keyword>
<keyword id="KW-0602">Photosynthesis</keyword>
<keyword id="KW-0604">Photosystem II</keyword>
<keyword id="KW-0934">Plastid</keyword>
<keyword id="KW-0793">Thylakoid</keyword>
<keyword id="KW-0812">Transmembrane</keyword>
<keyword id="KW-1133">Transmembrane helix</keyword>
<keyword id="KW-0813">Transport</keyword>
<protein>
    <recommendedName>
        <fullName evidence="2">Photosystem II D2 protein</fullName>
        <shortName evidence="2">PSII D2 protein</shortName>
        <ecNumber evidence="2">1.10.3.9</ecNumber>
    </recommendedName>
    <alternativeName>
        <fullName evidence="2">Photosystem Q(A) protein</fullName>
    </alternativeName>
</protein>
<feature type="initiator methionine" description="Removed" evidence="1">
    <location>
        <position position="1"/>
    </location>
</feature>
<feature type="chain" id="PRO_0000359682" description="Photosystem II D2 protein">
    <location>
        <begin position="2"/>
        <end position="353"/>
    </location>
</feature>
<feature type="transmembrane region" description="Helical" evidence="2">
    <location>
        <begin position="41"/>
        <end position="61"/>
    </location>
</feature>
<feature type="transmembrane region" description="Helical" evidence="2">
    <location>
        <begin position="125"/>
        <end position="141"/>
    </location>
</feature>
<feature type="transmembrane region" description="Helical" evidence="2">
    <location>
        <begin position="153"/>
        <end position="166"/>
    </location>
</feature>
<feature type="transmembrane region" description="Helical" evidence="2">
    <location>
        <begin position="208"/>
        <end position="228"/>
    </location>
</feature>
<feature type="transmembrane region" description="Helical" evidence="2">
    <location>
        <begin position="279"/>
        <end position="295"/>
    </location>
</feature>
<feature type="binding site" description="axial binding residue" evidence="2">
    <location>
        <position position="118"/>
    </location>
    <ligand>
        <name>chlorophyll a</name>
        <dbReference type="ChEBI" id="CHEBI:58416"/>
        <label>ChlzD2</label>
    </ligand>
    <ligandPart>
        <name>Mg</name>
        <dbReference type="ChEBI" id="CHEBI:25107"/>
    </ligandPart>
</feature>
<feature type="binding site" evidence="2">
    <location>
        <position position="130"/>
    </location>
    <ligand>
        <name>pheophytin a</name>
        <dbReference type="ChEBI" id="CHEBI:136840"/>
        <label>D2</label>
    </ligand>
</feature>
<feature type="binding site" evidence="2">
    <location>
        <position position="143"/>
    </location>
    <ligand>
        <name>pheophytin a</name>
        <dbReference type="ChEBI" id="CHEBI:136840"/>
        <label>D2</label>
    </ligand>
</feature>
<feature type="binding site" description="axial binding residue" evidence="2">
    <location>
        <position position="198"/>
    </location>
    <ligand>
        <name>chlorophyll a</name>
        <dbReference type="ChEBI" id="CHEBI:58416"/>
        <label>PD2</label>
    </ligand>
    <ligandPart>
        <name>Mg</name>
        <dbReference type="ChEBI" id="CHEBI:25107"/>
    </ligandPart>
</feature>
<feature type="binding site" evidence="2">
    <location>
        <position position="215"/>
    </location>
    <ligand>
        <name>a plastoquinone</name>
        <dbReference type="ChEBI" id="CHEBI:17757"/>
        <label>Q(A)</label>
    </ligand>
</feature>
<feature type="binding site" evidence="2">
    <location>
        <position position="215"/>
    </location>
    <ligand>
        <name>Fe cation</name>
        <dbReference type="ChEBI" id="CHEBI:24875"/>
        <note>ligand shared with heterodimeric partner</note>
    </ligand>
</feature>
<feature type="binding site" evidence="2">
    <location>
        <position position="262"/>
    </location>
    <ligand>
        <name>a plastoquinone</name>
        <dbReference type="ChEBI" id="CHEBI:17757"/>
        <label>Q(A)</label>
    </ligand>
</feature>
<feature type="binding site" evidence="2">
    <location>
        <position position="269"/>
    </location>
    <ligand>
        <name>Fe cation</name>
        <dbReference type="ChEBI" id="CHEBI:24875"/>
        <note>ligand shared with heterodimeric partner</note>
    </ligand>
</feature>
<feature type="modified residue" description="N-acetylthreonine" evidence="1">
    <location>
        <position position="2"/>
    </location>
</feature>
<feature type="modified residue" description="Phosphothreonine" evidence="1">
    <location>
        <position position="2"/>
    </location>
</feature>